<organism>
    <name type="scientific">Staphylococcus aureus (strain bovine RF122 / ET3-1)</name>
    <dbReference type="NCBI Taxonomy" id="273036"/>
    <lineage>
        <taxon>Bacteria</taxon>
        <taxon>Bacillati</taxon>
        <taxon>Bacillota</taxon>
        <taxon>Bacilli</taxon>
        <taxon>Bacillales</taxon>
        <taxon>Staphylococcaceae</taxon>
        <taxon>Staphylococcus</taxon>
    </lineage>
</organism>
<protein>
    <recommendedName>
        <fullName>Uncharacterized lipoprotein SAB2248c</fullName>
    </recommendedName>
</protein>
<dbReference type="EMBL" id="AJ938182">
    <property type="protein sequence ID" value="CAI81937.1"/>
    <property type="molecule type" value="Genomic_DNA"/>
</dbReference>
<dbReference type="RefSeq" id="WP_000827004.1">
    <property type="nucleotide sequence ID" value="NC_007622.1"/>
</dbReference>
<dbReference type="SMR" id="Q2YZ16"/>
<dbReference type="KEGG" id="sab:SAB2248c"/>
<dbReference type="HOGENOM" id="CLU_088585_0_0_9"/>
<dbReference type="GO" id="GO:0005886">
    <property type="term" value="C:plasma membrane"/>
    <property type="evidence" value="ECO:0007669"/>
    <property type="project" value="UniProtKB-SubCell"/>
</dbReference>
<dbReference type="PROSITE" id="PS51257">
    <property type="entry name" value="PROKAR_LIPOPROTEIN"/>
    <property type="match status" value="1"/>
</dbReference>
<evidence type="ECO:0000255" key="1">
    <source>
        <dbReference type="PROSITE-ProRule" id="PRU00303"/>
    </source>
</evidence>
<evidence type="ECO:0000256" key="2">
    <source>
        <dbReference type="SAM" id="MobiDB-lite"/>
    </source>
</evidence>
<name>Y2248_STAAB</name>
<keyword id="KW-1003">Cell membrane</keyword>
<keyword id="KW-0449">Lipoprotein</keyword>
<keyword id="KW-0472">Membrane</keyword>
<keyword id="KW-0564">Palmitate</keyword>
<keyword id="KW-0732">Signal</keyword>
<proteinExistence type="inferred from homology"/>
<gene>
    <name type="ordered locus">SAB2248c</name>
</gene>
<feature type="signal peptide" evidence="1">
    <location>
        <begin position="1"/>
        <end position="17"/>
    </location>
</feature>
<feature type="chain" id="PRO_0000296174" description="Uncharacterized lipoprotein SAB2248c">
    <location>
        <begin position="18"/>
        <end position="209"/>
    </location>
</feature>
<feature type="region of interest" description="Disordered" evidence="2">
    <location>
        <begin position="17"/>
        <end position="105"/>
    </location>
</feature>
<feature type="compositionally biased region" description="Basic and acidic residues" evidence="2">
    <location>
        <begin position="23"/>
        <end position="70"/>
    </location>
</feature>
<feature type="compositionally biased region" description="Low complexity" evidence="2">
    <location>
        <begin position="71"/>
        <end position="105"/>
    </location>
</feature>
<feature type="lipid moiety-binding region" description="N-palmitoyl cysteine" evidence="1">
    <location>
        <position position="18"/>
    </location>
</feature>
<feature type="lipid moiety-binding region" description="S-diacylglycerol cysteine" evidence="1">
    <location>
        <position position="18"/>
    </location>
</feature>
<accession>Q2YZ16</accession>
<sequence>MKRLVTGLLALSLFLAACGQDSDQQKDSNKEKDDKAKTEQQDEKTNDSSKDKKDKKDDSKDVNKDNKDNSANDNQQQSNSNATNNDQNQTNNNQSSNNQANNNQKSSYVAPYYGQNAAPVVRQIYPFNGNKTQALQQLPNFQTALNSANNEANKFGSNNKVYNDYSIEEHNGNYKYVFSFKDPNANGKYSIVTVDYTGQAMVTDPNYQQ</sequence>
<reference key="1">
    <citation type="journal article" date="2007" name="PLoS ONE">
        <title>Molecular correlates of host specialization in Staphylococcus aureus.</title>
        <authorList>
            <person name="Herron-Olson L."/>
            <person name="Fitzgerald J.R."/>
            <person name="Musser J.M."/>
            <person name="Kapur V."/>
        </authorList>
    </citation>
    <scope>NUCLEOTIDE SEQUENCE [LARGE SCALE GENOMIC DNA]</scope>
    <source>
        <strain>bovine RF122 / ET3-1</strain>
    </source>
</reference>
<comment type="subcellular location">
    <subcellularLocation>
        <location evidence="1">Cell membrane</location>
        <topology evidence="1">Lipid-anchor</topology>
    </subcellularLocation>
</comment>